<dbReference type="EMBL" id="AB107647">
    <property type="protein sequence ID" value="BAC75384.1"/>
    <property type="molecule type" value="mRNA"/>
</dbReference>
<dbReference type="SMR" id="Q865X6"/>
<dbReference type="GO" id="GO:0005615">
    <property type="term" value="C:extracellular space"/>
    <property type="evidence" value="ECO:0007669"/>
    <property type="project" value="UniProtKB-KW"/>
</dbReference>
<dbReference type="GO" id="GO:0005896">
    <property type="term" value="C:interleukin-6 receptor complex"/>
    <property type="evidence" value="ECO:0007669"/>
    <property type="project" value="TreeGrafter"/>
</dbReference>
<dbReference type="GO" id="GO:0005125">
    <property type="term" value="F:cytokine activity"/>
    <property type="evidence" value="ECO:0007669"/>
    <property type="project" value="UniProtKB-KW"/>
</dbReference>
<dbReference type="GO" id="GO:0008083">
    <property type="term" value="F:growth factor activity"/>
    <property type="evidence" value="ECO:0007669"/>
    <property type="project" value="UniProtKB-KW"/>
</dbReference>
<dbReference type="GO" id="GO:0005138">
    <property type="term" value="F:interleukin-6 receptor binding"/>
    <property type="evidence" value="ECO:0007669"/>
    <property type="project" value="InterPro"/>
</dbReference>
<dbReference type="GO" id="GO:0006953">
    <property type="term" value="P:acute-phase response"/>
    <property type="evidence" value="ECO:0007669"/>
    <property type="project" value="UniProtKB-KW"/>
</dbReference>
<dbReference type="GO" id="GO:0042593">
    <property type="term" value="P:glucose homeostasis"/>
    <property type="evidence" value="ECO:0000250"/>
    <property type="project" value="UniProtKB"/>
</dbReference>
<dbReference type="GO" id="GO:0072574">
    <property type="term" value="P:hepatocyte proliferation"/>
    <property type="evidence" value="ECO:0000250"/>
    <property type="project" value="UniProtKB"/>
</dbReference>
<dbReference type="GO" id="GO:0070102">
    <property type="term" value="P:interleukin-6-mediated signaling pathway"/>
    <property type="evidence" value="ECO:0000250"/>
    <property type="project" value="UniProtKB"/>
</dbReference>
<dbReference type="GO" id="GO:0097421">
    <property type="term" value="P:liver regeneration"/>
    <property type="evidence" value="ECO:0000250"/>
    <property type="project" value="UniProtKB"/>
</dbReference>
<dbReference type="GO" id="GO:0051240">
    <property type="term" value="P:positive regulation of multicellular organismal process"/>
    <property type="evidence" value="ECO:0007669"/>
    <property type="project" value="UniProtKB-ARBA"/>
</dbReference>
<dbReference type="GO" id="GO:0046427">
    <property type="term" value="P:positive regulation of receptor signaling pathway via JAK-STAT"/>
    <property type="evidence" value="ECO:0007669"/>
    <property type="project" value="TreeGrafter"/>
</dbReference>
<dbReference type="GO" id="GO:1904894">
    <property type="term" value="P:positive regulation of receptor signaling pathway via STAT"/>
    <property type="evidence" value="ECO:0000250"/>
    <property type="project" value="UniProtKB"/>
</dbReference>
<dbReference type="GO" id="GO:0070092">
    <property type="term" value="P:regulation of glucagon secretion"/>
    <property type="evidence" value="ECO:0000250"/>
    <property type="project" value="UniProtKB"/>
</dbReference>
<dbReference type="GO" id="GO:0050796">
    <property type="term" value="P:regulation of insulin secretion"/>
    <property type="evidence" value="ECO:0000250"/>
    <property type="project" value="UniProtKB"/>
</dbReference>
<dbReference type="GO" id="GO:0014823">
    <property type="term" value="P:response to activity"/>
    <property type="evidence" value="ECO:0000250"/>
    <property type="project" value="UniProtKB"/>
</dbReference>
<dbReference type="GO" id="GO:0072540">
    <property type="term" value="P:T-helper 17 cell lineage commitment"/>
    <property type="evidence" value="ECO:0000250"/>
    <property type="project" value="UniProtKB"/>
</dbReference>
<dbReference type="GO" id="GO:0010573">
    <property type="term" value="P:vascular endothelial growth factor production"/>
    <property type="evidence" value="ECO:0000250"/>
    <property type="project" value="UniProtKB"/>
</dbReference>
<dbReference type="FunFam" id="1.20.1250.10:FF:000006">
    <property type="entry name" value="Interleukin-6"/>
    <property type="match status" value="1"/>
</dbReference>
<dbReference type="Gene3D" id="1.20.1250.10">
    <property type="match status" value="1"/>
</dbReference>
<dbReference type="InterPro" id="IPR009079">
    <property type="entry name" value="4_helix_cytokine-like_core"/>
</dbReference>
<dbReference type="InterPro" id="IPR003574">
    <property type="entry name" value="IL-6-like"/>
</dbReference>
<dbReference type="InterPro" id="IPR030474">
    <property type="entry name" value="IL-6/GCSF/MGF"/>
</dbReference>
<dbReference type="InterPro" id="IPR030473">
    <property type="entry name" value="IL6/GCSF/MGF_CS"/>
</dbReference>
<dbReference type="PANTHER" id="PTHR48494">
    <property type="entry name" value="INTERLEUKIN-6"/>
    <property type="match status" value="1"/>
</dbReference>
<dbReference type="PANTHER" id="PTHR48494:SF1">
    <property type="entry name" value="INTERLEUKIN-6"/>
    <property type="match status" value="1"/>
</dbReference>
<dbReference type="Pfam" id="PF00489">
    <property type="entry name" value="IL6"/>
    <property type="match status" value="1"/>
</dbReference>
<dbReference type="PIRSF" id="PIRSF001935">
    <property type="entry name" value="IL6_MGF_GCSF"/>
    <property type="match status" value="1"/>
</dbReference>
<dbReference type="PRINTS" id="PR00433">
    <property type="entry name" value="IL6GCSFMGF"/>
</dbReference>
<dbReference type="PRINTS" id="PR00434">
    <property type="entry name" value="INTERLEUKIN6"/>
</dbReference>
<dbReference type="SMART" id="SM00126">
    <property type="entry name" value="IL6"/>
    <property type="match status" value="1"/>
</dbReference>
<dbReference type="SUPFAM" id="SSF47266">
    <property type="entry name" value="4-helical cytokines"/>
    <property type="match status" value="1"/>
</dbReference>
<dbReference type="PROSITE" id="PS00254">
    <property type="entry name" value="INTERLEUKIN_6"/>
    <property type="match status" value="1"/>
</dbReference>
<sequence length="211" mass="23988">MNSLSTSTFSPVAFSLGLLLVMATAFPTPVPLGEDFKDGTTSKRPFTSPDKTEELIKYILGRISAMRKEMCEKYDKCENSKEALSENNLNLPKMTEKDGCFQSGFNQETCLMRITIGLLEFQIYLDYLQNYYEGDKGNTEAVQISTKALIQLLRQKVKQPEEVSTPNPITGSSLLNKLQTENQWMKNTKMILILRSLEDFLQFSLRAVRIM</sequence>
<name>IL6_LAMGL</name>
<keyword id="KW-0011">Acute phase</keyword>
<keyword id="KW-0202">Cytokine</keyword>
<keyword id="KW-1015">Disulfide bond</keyword>
<keyword id="KW-0339">Growth factor</keyword>
<keyword id="KW-0597">Phosphoprotein</keyword>
<keyword id="KW-0964">Secreted</keyword>
<keyword id="KW-0732">Signal</keyword>
<gene>
    <name type="primary">IL6</name>
</gene>
<organism>
    <name type="scientific">Lama glama</name>
    <name type="common">Llama</name>
    <dbReference type="NCBI Taxonomy" id="9844"/>
    <lineage>
        <taxon>Eukaryota</taxon>
        <taxon>Metazoa</taxon>
        <taxon>Chordata</taxon>
        <taxon>Craniata</taxon>
        <taxon>Vertebrata</taxon>
        <taxon>Euteleostomi</taxon>
        <taxon>Mammalia</taxon>
        <taxon>Eutheria</taxon>
        <taxon>Laurasiatheria</taxon>
        <taxon>Artiodactyla</taxon>
        <taxon>Tylopoda</taxon>
        <taxon>Camelidae</taxon>
        <taxon>Lama</taxon>
    </lineage>
</organism>
<accession>Q865X6</accession>
<comment type="function">
    <text evidence="2">Cytokine with a wide variety of biological functions in immunity, tissue regeneration, and metabolism. Binds to IL6R, then the complex associates to the signaling subunit IL6ST/gp130 to trigger the intracellular IL6-signaling pathway. The interaction with the membrane-bound IL6R and IL6ST stimulates 'classic signaling', whereas the binding of IL6 and soluble IL6R to IL6ST stimulates 'trans-signaling'. Alternatively, 'cluster signaling' occurs when membrane-bound IL6:IL6R complexes on transmitter cells activate IL6ST receptors on neighboring receiver cells.</text>
</comment>
<comment type="function">
    <text evidence="2 3">IL6 is a potent inducer of the acute phase response. Rapid production of IL6 contributes to host defense during infection and tissue injury, but excessive IL6 synthesis is involved in disease pathology. In the innate immune response, is synthesized by myeloid cells, such as macrophages and dendritic cells, upon recognition of pathogens through toll-like receptors (TLRs) at the site of infection or tissue injury (By similarity). In the adaptive immune response, is required for the differentiation of B cells into immunoglobulin-secreting cells. Plays a major role in the differentiation of CD4(+) T cell subsets. Essential factor for the development of T follicular helper (Tfh) cells that are required for the induction of germinal-center formation. Required to drive naive CD4(+) T cells to the Th17 lineage. Also required for proliferation of myeloma cells and the survival of plasmablast cells (By similarity).</text>
</comment>
<comment type="function">
    <text evidence="2 3">Acts as an essential factor in bone homeostasis and on vessels directly or indirectly by induction of VEGF, resulting in increased angiogenesis activity and vascular permeability. Induces, through 'trans-signaling' and synergistically with IL1B and TNF, the production of VEGF. Involved in metabolic controls, is discharged into the bloodstream after muscle contraction increasing lipolysis and improving insulin resistance (By similarity). 'Trans-signaling' in central nervous system also regulates energy and glucose homeostasis. Mediates, through GLP-1, crosstalk between insulin-sensitive tissues, intestinal L cells and pancreatic islets to adapt to changes in insulin demand (By similarity). Also acts as a myokine (By similarity). Plays a protective role during liver injury, being required for maintenance of tissue regeneration (By similarity). Also has a pivotal role in iron metabolism by regulating HAMP/hepcidin expression upon inflammation or bacterial infection (By similarity). Through activation of IL6ST-YAP-NOTCH pathway, induces inflammation-induced epithelial regeneration (By similarity).</text>
</comment>
<comment type="subunit">
    <text evidence="2">Component of a hexamer of two molecules each of IL6, IL6R and IL6ST; first binds to IL6R to associate with the signaling subunit IL6ST. Interacts with IL6R (via the N-terminal ectodomain); this interaction may be affected by IL6R-binding with SORL1, hence decreasing IL6 cis signaling. Interacts with SORL1 (via the N-terminal ectodomain); this interaction leads to IL6 internalization and lysosomal degradation. May form a trimeric complex with the soluble SORL1 ectodomain and soluble IL6R receptor; this interaction might stabilize circulating IL6, hence promoting IL6 trans signaling.</text>
</comment>
<comment type="subcellular location">
    <subcellularLocation>
        <location evidence="2">Secreted</location>
    </subcellularLocation>
</comment>
<comment type="similarity">
    <text evidence="5">Belongs to the IL-6 superfamily.</text>
</comment>
<evidence type="ECO:0000250" key="1"/>
<evidence type="ECO:0000250" key="2">
    <source>
        <dbReference type="UniProtKB" id="P05231"/>
    </source>
</evidence>
<evidence type="ECO:0000250" key="3">
    <source>
        <dbReference type="UniProtKB" id="P08505"/>
    </source>
</evidence>
<evidence type="ECO:0000255" key="4"/>
<evidence type="ECO:0000305" key="5"/>
<reference key="1">
    <citation type="submission" date="2003-04" db="EMBL/GenBank/DDBJ databases">
        <title>Cloning and sequence analysis of cytokine cDNAs of llama and camel.</title>
        <authorList>
            <person name="Odbileg R."/>
            <person name="Lee S.-I."/>
            <person name="Yoshida R."/>
            <person name="Chang K.-S."/>
            <person name="Ohashi K."/>
            <person name="Sugimoto C."/>
            <person name="Onuma M."/>
        </authorList>
    </citation>
    <scope>NUCLEOTIDE SEQUENCE [MRNA]</scope>
</reference>
<feature type="signal peptide" evidence="4">
    <location>
        <begin position="1"/>
        <end position="25"/>
    </location>
</feature>
<feature type="chain" id="PRO_0000015583" description="Interleukin-6">
    <location>
        <begin position="26"/>
        <end position="211"/>
    </location>
</feature>
<feature type="modified residue" description="Phosphoserine" evidence="2">
    <location>
        <position position="80"/>
    </location>
</feature>
<feature type="disulfide bond" evidence="1">
    <location>
        <begin position="71"/>
        <end position="77"/>
    </location>
</feature>
<feature type="disulfide bond" evidence="1">
    <location>
        <begin position="100"/>
        <end position="110"/>
    </location>
</feature>
<protein>
    <recommendedName>
        <fullName>Interleukin-6</fullName>
        <shortName>IL-6</shortName>
    </recommendedName>
</protein>
<proteinExistence type="evidence at transcript level"/>